<reference key="1">
    <citation type="journal article" date="2014" name="Stand. Genomic Sci.">
        <title>Complete genome sequence of Anabaena variabilis ATCC 29413.</title>
        <authorList>
            <person name="Thiel T."/>
            <person name="Pratte B.S."/>
            <person name="Zhong J."/>
            <person name="Goodwin L."/>
            <person name="Copeland A."/>
            <person name="Lucas S."/>
            <person name="Han C."/>
            <person name="Pitluck S."/>
            <person name="Land M.L."/>
            <person name="Kyrpides N.C."/>
            <person name="Woyke T."/>
        </authorList>
    </citation>
    <scope>NUCLEOTIDE SEQUENCE [LARGE SCALE GENOMIC DNA]</scope>
    <source>
        <strain>ATCC 29413 / PCC 7937</strain>
    </source>
</reference>
<sequence length="491" mass="51902">MAIQLSDKPLLEWAGDTLAIALFEDAVELTGELASLDEKFAGILKELIAEEEFTGKANSTVFTRVSANIPVRKIILVGLGKTEAFNIDTLRRAAAAVGKVGKKQKSKVIGLSFPLWNNDPTASSQAIAEGVQLALYQDNRFKSDPDDKGSQVETVELLGFAGQEAAINRANQIVSGVILARQLVAAPANSVTPITMAETAQQIAQDYGLQIEILEQEDCEKLGMGAFLGVALASDLPPKFIHLTYKPESTPKRKLAIVGKGLTFDSGGLNIKGAGSGIETMKIDMGGAAATLGAAKAIAQIKPNVEVHFISAVTENMISGKAMHPGDILTASNGKTIEVNNTDAEGRLTLADALVYTDKLGLDAIVDLATLTGANVIALGDDIAGLYTPDDALAGQLEQAASESGEKIWRMPLEEKYFEGLKSGIADMKNTGPRPGGSITAALFLKQFVKDTPWAHLDIAGPVWADKENGYNGPGATGYGVRLLVDWVLSE</sequence>
<comment type="function">
    <text evidence="1">Presumably involved in the processing and regular turnover of intracellular proteins. Catalyzes the removal of unsubstituted N-terminal amino acids from various peptides.</text>
</comment>
<comment type="catalytic activity">
    <reaction evidence="1">
        <text>Release of an N-terminal amino acid, Xaa-|-Yaa-, in which Xaa is preferably Leu, but may be other amino acids including Pro although not Arg or Lys, and Yaa may be Pro. Amino acid amides and methyl esters are also readily hydrolyzed, but rates on arylamides are exceedingly low.</text>
        <dbReference type="EC" id="3.4.11.1"/>
    </reaction>
</comment>
<comment type="catalytic activity">
    <reaction evidence="1">
        <text>Release of an N-terminal amino acid, preferentially leucine, but not glutamic or aspartic acids.</text>
        <dbReference type="EC" id="3.4.11.10"/>
    </reaction>
</comment>
<comment type="cofactor">
    <cofactor evidence="1">
        <name>Mn(2+)</name>
        <dbReference type="ChEBI" id="CHEBI:29035"/>
    </cofactor>
    <text evidence="1">Binds 2 manganese ions per subunit.</text>
</comment>
<comment type="subcellular location">
    <subcellularLocation>
        <location evidence="1">Cytoplasm</location>
    </subcellularLocation>
</comment>
<comment type="similarity">
    <text evidence="1">Belongs to the peptidase M17 family.</text>
</comment>
<proteinExistence type="inferred from homology"/>
<dbReference type="EC" id="3.4.11.1" evidence="1"/>
<dbReference type="EC" id="3.4.11.10" evidence="1"/>
<dbReference type="EMBL" id="CP000117">
    <property type="protein sequence ID" value="ABA22340.1"/>
    <property type="molecule type" value="Genomic_DNA"/>
</dbReference>
<dbReference type="SMR" id="Q3M9J6"/>
<dbReference type="STRING" id="240292.Ava_2727"/>
<dbReference type="MEROPS" id="M17.A01"/>
<dbReference type="KEGG" id="ava:Ava_2727"/>
<dbReference type="eggNOG" id="COG0260">
    <property type="taxonomic scope" value="Bacteria"/>
</dbReference>
<dbReference type="HOGENOM" id="CLU_013734_5_1_3"/>
<dbReference type="Proteomes" id="UP000002533">
    <property type="component" value="Chromosome"/>
</dbReference>
<dbReference type="GO" id="GO:0005737">
    <property type="term" value="C:cytoplasm"/>
    <property type="evidence" value="ECO:0007669"/>
    <property type="project" value="UniProtKB-SubCell"/>
</dbReference>
<dbReference type="GO" id="GO:0030145">
    <property type="term" value="F:manganese ion binding"/>
    <property type="evidence" value="ECO:0007669"/>
    <property type="project" value="UniProtKB-UniRule"/>
</dbReference>
<dbReference type="GO" id="GO:0070006">
    <property type="term" value="F:metalloaminopeptidase activity"/>
    <property type="evidence" value="ECO:0007669"/>
    <property type="project" value="InterPro"/>
</dbReference>
<dbReference type="GO" id="GO:0006508">
    <property type="term" value="P:proteolysis"/>
    <property type="evidence" value="ECO:0007669"/>
    <property type="project" value="UniProtKB-KW"/>
</dbReference>
<dbReference type="CDD" id="cd00433">
    <property type="entry name" value="Peptidase_M17"/>
    <property type="match status" value="1"/>
</dbReference>
<dbReference type="Gene3D" id="3.40.220.10">
    <property type="entry name" value="Leucine Aminopeptidase, subunit E, domain 1"/>
    <property type="match status" value="1"/>
</dbReference>
<dbReference type="Gene3D" id="3.40.630.10">
    <property type="entry name" value="Zn peptidases"/>
    <property type="match status" value="1"/>
</dbReference>
<dbReference type="HAMAP" id="MF_00181">
    <property type="entry name" value="Cytosol_peptidase_M17"/>
    <property type="match status" value="1"/>
</dbReference>
<dbReference type="InterPro" id="IPR011356">
    <property type="entry name" value="Leucine_aapep/pepB"/>
</dbReference>
<dbReference type="InterPro" id="IPR043472">
    <property type="entry name" value="Macro_dom-like"/>
</dbReference>
<dbReference type="InterPro" id="IPR000819">
    <property type="entry name" value="Peptidase_M17_C"/>
</dbReference>
<dbReference type="InterPro" id="IPR023042">
    <property type="entry name" value="Peptidase_M17_leu_NH2_pept"/>
</dbReference>
<dbReference type="InterPro" id="IPR008283">
    <property type="entry name" value="Peptidase_M17_N"/>
</dbReference>
<dbReference type="NCBIfam" id="NF002073">
    <property type="entry name" value="PRK00913.1-2"/>
    <property type="match status" value="1"/>
</dbReference>
<dbReference type="NCBIfam" id="NF002074">
    <property type="entry name" value="PRK00913.1-4"/>
    <property type="match status" value="1"/>
</dbReference>
<dbReference type="NCBIfam" id="NF002076">
    <property type="entry name" value="PRK00913.2-3"/>
    <property type="match status" value="1"/>
</dbReference>
<dbReference type="NCBIfam" id="NF002083">
    <property type="entry name" value="PRK00913.3-5"/>
    <property type="match status" value="1"/>
</dbReference>
<dbReference type="PANTHER" id="PTHR11963:SF23">
    <property type="entry name" value="CYTOSOL AMINOPEPTIDASE"/>
    <property type="match status" value="1"/>
</dbReference>
<dbReference type="PANTHER" id="PTHR11963">
    <property type="entry name" value="LEUCINE AMINOPEPTIDASE-RELATED"/>
    <property type="match status" value="1"/>
</dbReference>
<dbReference type="Pfam" id="PF00883">
    <property type="entry name" value="Peptidase_M17"/>
    <property type="match status" value="1"/>
</dbReference>
<dbReference type="Pfam" id="PF02789">
    <property type="entry name" value="Peptidase_M17_N"/>
    <property type="match status" value="1"/>
</dbReference>
<dbReference type="PRINTS" id="PR00481">
    <property type="entry name" value="LAMNOPPTDASE"/>
</dbReference>
<dbReference type="SUPFAM" id="SSF52949">
    <property type="entry name" value="Macro domain-like"/>
    <property type="match status" value="1"/>
</dbReference>
<dbReference type="SUPFAM" id="SSF53187">
    <property type="entry name" value="Zn-dependent exopeptidases"/>
    <property type="match status" value="1"/>
</dbReference>
<dbReference type="PROSITE" id="PS00631">
    <property type="entry name" value="CYTOSOL_AP"/>
    <property type="match status" value="1"/>
</dbReference>
<protein>
    <recommendedName>
        <fullName evidence="1">Probable cytosol aminopeptidase</fullName>
        <ecNumber evidence="1">3.4.11.1</ecNumber>
    </recommendedName>
    <alternativeName>
        <fullName evidence="1">Leucine aminopeptidase</fullName>
        <shortName evidence="1">LAP</shortName>
        <ecNumber evidence="1">3.4.11.10</ecNumber>
    </alternativeName>
    <alternativeName>
        <fullName evidence="1">Leucyl aminopeptidase</fullName>
    </alternativeName>
</protein>
<keyword id="KW-0031">Aminopeptidase</keyword>
<keyword id="KW-0963">Cytoplasm</keyword>
<keyword id="KW-0378">Hydrolase</keyword>
<keyword id="KW-0464">Manganese</keyword>
<keyword id="KW-0479">Metal-binding</keyword>
<keyword id="KW-0645">Protease</keyword>
<gene>
    <name evidence="1" type="primary">pepA</name>
    <name type="ordered locus">Ava_2727</name>
</gene>
<evidence type="ECO:0000255" key="1">
    <source>
        <dbReference type="HAMAP-Rule" id="MF_00181"/>
    </source>
</evidence>
<organism>
    <name type="scientific">Trichormus variabilis (strain ATCC 29413 / PCC 7937)</name>
    <name type="common">Anabaena variabilis</name>
    <dbReference type="NCBI Taxonomy" id="240292"/>
    <lineage>
        <taxon>Bacteria</taxon>
        <taxon>Bacillati</taxon>
        <taxon>Cyanobacteriota</taxon>
        <taxon>Cyanophyceae</taxon>
        <taxon>Nostocales</taxon>
        <taxon>Nostocaceae</taxon>
        <taxon>Trichormus</taxon>
    </lineage>
</organism>
<name>AMPA_TRIV2</name>
<feature type="chain" id="PRO_1000019878" description="Probable cytosol aminopeptidase">
    <location>
        <begin position="1"/>
        <end position="491"/>
    </location>
</feature>
<feature type="active site" evidence="1">
    <location>
        <position position="272"/>
    </location>
</feature>
<feature type="active site" evidence="1">
    <location>
        <position position="347"/>
    </location>
</feature>
<feature type="binding site" evidence="1">
    <location>
        <position position="260"/>
    </location>
    <ligand>
        <name>Mn(2+)</name>
        <dbReference type="ChEBI" id="CHEBI:29035"/>
        <label>2</label>
    </ligand>
</feature>
<feature type="binding site" evidence="1">
    <location>
        <position position="265"/>
    </location>
    <ligand>
        <name>Mn(2+)</name>
        <dbReference type="ChEBI" id="CHEBI:29035"/>
        <label>1</label>
    </ligand>
</feature>
<feature type="binding site" evidence="1">
    <location>
        <position position="265"/>
    </location>
    <ligand>
        <name>Mn(2+)</name>
        <dbReference type="ChEBI" id="CHEBI:29035"/>
        <label>2</label>
    </ligand>
</feature>
<feature type="binding site" evidence="1">
    <location>
        <position position="284"/>
    </location>
    <ligand>
        <name>Mn(2+)</name>
        <dbReference type="ChEBI" id="CHEBI:29035"/>
        <label>2</label>
    </ligand>
</feature>
<feature type="binding site" evidence="1">
    <location>
        <position position="343"/>
    </location>
    <ligand>
        <name>Mn(2+)</name>
        <dbReference type="ChEBI" id="CHEBI:29035"/>
        <label>1</label>
    </ligand>
</feature>
<feature type="binding site" evidence="1">
    <location>
        <position position="345"/>
    </location>
    <ligand>
        <name>Mn(2+)</name>
        <dbReference type="ChEBI" id="CHEBI:29035"/>
        <label>1</label>
    </ligand>
</feature>
<feature type="binding site" evidence="1">
    <location>
        <position position="345"/>
    </location>
    <ligand>
        <name>Mn(2+)</name>
        <dbReference type="ChEBI" id="CHEBI:29035"/>
        <label>2</label>
    </ligand>
</feature>
<accession>Q3M9J6</accession>